<evidence type="ECO:0000250" key="1">
    <source>
        <dbReference type="UniProtKB" id="A0A1D8PQ86"/>
    </source>
</evidence>
<evidence type="ECO:0000255" key="2"/>
<evidence type="ECO:0000255" key="3">
    <source>
        <dbReference type="PROSITE-ProRule" id="PRU00498"/>
    </source>
</evidence>
<evidence type="ECO:0000256" key="4">
    <source>
        <dbReference type="SAM" id="MobiDB-lite"/>
    </source>
</evidence>
<evidence type="ECO:0000269" key="5">
    <source>
    </source>
</evidence>
<evidence type="ECO:0000269" key="6">
    <source>
    </source>
</evidence>
<evidence type="ECO:0000269" key="7">
    <source>
    </source>
</evidence>
<evidence type="ECO:0000269" key="8">
    <source>
    </source>
</evidence>
<evidence type="ECO:0000269" key="9">
    <source>
    </source>
</evidence>
<evidence type="ECO:0000269" key="10">
    <source>
    </source>
</evidence>
<evidence type="ECO:0000269" key="11">
    <source>
    </source>
</evidence>
<evidence type="ECO:0000269" key="12">
    <source>
    </source>
</evidence>
<evidence type="ECO:0000269" key="13">
    <source>
    </source>
</evidence>
<evidence type="ECO:0000269" key="14">
    <source>
    </source>
</evidence>
<evidence type="ECO:0000269" key="15">
    <source>
    </source>
</evidence>
<evidence type="ECO:0000269" key="16">
    <source>
    </source>
</evidence>
<evidence type="ECO:0000269" key="17">
    <source>
    </source>
</evidence>
<evidence type="ECO:0000269" key="18">
    <source>
    </source>
</evidence>
<evidence type="ECO:0000269" key="19">
    <source>
    </source>
</evidence>
<evidence type="ECO:0000269" key="20">
    <source>
    </source>
</evidence>
<evidence type="ECO:0000305" key="21"/>
<evidence type="ECO:0000305" key="22">
    <source>
    </source>
</evidence>
<comment type="function">
    <text evidence="5 6 8 9 10 12 17 18 19 20">Cell surface adhesion protein which mediates both yeast-to-host tissue adherence and yeast aggregation. Plays an important role in the pathogenesis of C.albicans infections. Forms amyloid structures, essential for cell-cell association and cell-substrate adhesion to polystyrene.</text>
</comment>
<comment type="subunit">
    <text evidence="13 14">Forms homodimers through the tandem repeats. Aggregates in amyloid-like structures, with self-propagating secondary-structure changes, amyloid-characteristic dye binding, and induced birefringence.</text>
</comment>
<comment type="subcellular location">
    <subcellularLocation>
        <location>Cell membrane</location>
        <topology evidence="22">Lipid-anchor</topology>
        <topology evidence="22">GPI-anchor</topology>
    </subcellularLocation>
    <subcellularLocation>
        <location evidence="16">Secreted</location>
        <location evidence="16">Cell wall</location>
    </subcellularLocation>
    <text evidence="22">Identified as covalently-linked GPI-modified cell wall protein (GPI-CWP) in the outer cell wall layer.</text>
</comment>
<comment type="induction">
    <text evidence="11 15">Highly expressed in biofilms and during candidiasis infection dissemination.</text>
</comment>
<comment type="domain">
    <text evidence="9 14">Each ALS protein has a similar three-domain structure, including a N-ter domain of 433-436 amino acids that is 55-90 percent identical across the family and which mediates adherence to various materials; a central domain of variable numbers of tandemly repeated copies of a 36 amino acid motif; and a C-ter domain that is relatively variable in length and sequence across the family.</text>
</comment>
<comment type="PTM">
    <text evidence="22">The GPI-anchor is attached to the protein in the endoplasmic reticulum and serves to target the protein to the cell surface. There, the glucosamine-inositol phospholipid moiety is cleaved off and the GPI-modified mannoprotein is covalently attached via its lipidless GPI glycan remnant to the 1,6-beta-glucan of the outer cell wall layer.</text>
</comment>
<comment type="similarity">
    <text evidence="21">Belongs to the ALS family.</text>
</comment>
<keyword id="KW-0130">Cell adhesion</keyword>
<keyword id="KW-1003">Cell membrane</keyword>
<keyword id="KW-0134">Cell wall</keyword>
<keyword id="KW-1015">Disulfide bond</keyword>
<keyword id="KW-0325">Glycoprotein</keyword>
<keyword id="KW-0336">GPI-anchor</keyword>
<keyword id="KW-0449">Lipoprotein</keyword>
<keyword id="KW-0472">Membrane</keyword>
<keyword id="KW-1185">Reference proteome</keyword>
<keyword id="KW-0677">Repeat</keyword>
<keyword id="KW-0964">Secreted</keyword>
<keyword id="KW-0732">Signal</keyword>
<keyword id="KW-0843">Virulence</keyword>
<accession>Q5A8T7</accession>
<accession>A0A1D8PQ81</accession>
<accession>Q5A8L3</accession>
<accession>Q874K9</accession>
<accession>Q874L0</accession>
<organism>
    <name type="scientific">Candida albicans (strain SC5314 / ATCC MYA-2876)</name>
    <name type="common">Yeast</name>
    <dbReference type="NCBI Taxonomy" id="237561"/>
    <lineage>
        <taxon>Eukaryota</taxon>
        <taxon>Fungi</taxon>
        <taxon>Dikarya</taxon>
        <taxon>Ascomycota</taxon>
        <taxon>Saccharomycotina</taxon>
        <taxon>Pichiomycetes</taxon>
        <taxon>Debaryomycetaceae</taxon>
        <taxon>Candida/Lodderomyces clade</taxon>
        <taxon>Candida</taxon>
    </lineage>
</organism>
<proteinExistence type="evidence at protein level"/>
<dbReference type="EMBL" id="AY227439">
    <property type="protein sequence ID" value="AAO72528.1"/>
    <property type="molecule type" value="Genomic_DNA"/>
</dbReference>
<dbReference type="EMBL" id="AY227440">
    <property type="protein sequence ID" value="AAO72529.1"/>
    <property type="molecule type" value="Genomic_DNA"/>
</dbReference>
<dbReference type="EMBL" id="CP017628">
    <property type="protein sequence ID" value="AOW30296.1"/>
    <property type="molecule type" value="Genomic_DNA"/>
</dbReference>
<dbReference type="RefSeq" id="XP_718074.2">
    <property type="nucleotide sequence ID" value="XM_712981.2"/>
</dbReference>
<dbReference type="SMR" id="Q5A8T7"/>
<dbReference type="BioGRID" id="1223371">
    <property type="interactions" value="10"/>
</dbReference>
<dbReference type="STRING" id="237561.Q5A8T7"/>
<dbReference type="GlyCosmos" id="Q5A8T7">
    <property type="glycosylation" value="5 sites, No reported glycans"/>
</dbReference>
<dbReference type="EnsemblFungi" id="C6_03690W_A-T">
    <property type="protein sequence ID" value="C6_03690W_A-T-p1"/>
    <property type="gene ID" value="C6_03690W_A"/>
</dbReference>
<dbReference type="GeneID" id="3640277"/>
<dbReference type="KEGG" id="cal:CAALFM_C603690WA"/>
<dbReference type="CGD" id="CAL0000191115">
    <property type="gene designation" value="ALS5"/>
</dbReference>
<dbReference type="VEuPathDB" id="FungiDB:C6_03690W_A"/>
<dbReference type="HOGENOM" id="CLU_257941_0_0_1"/>
<dbReference type="InParanoid" id="Q5A8T7"/>
<dbReference type="OrthoDB" id="4023732at2759"/>
<dbReference type="CD-CODE" id="0971622F">
    <property type="entry name" value="Als5p amyloid"/>
</dbReference>
<dbReference type="PHI-base" id="PHI:11394"/>
<dbReference type="PRO" id="PR:Q5A8T7"/>
<dbReference type="Proteomes" id="UP000000559">
    <property type="component" value="Chromosome 6"/>
</dbReference>
<dbReference type="GO" id="GO:0009986">
    <property type="term" value="C:cell surface"/>
    <property type="evidence" value="ECO:0000318"/>
    <property type="project" value="GO_Central"/>
</dbReference>
<dbReference type="GO" id="GO:1903561">
    <property type="term" value="C:extracellular vesicle"/>
    <property type="evidence" value="ECO:0000318"/>
    <property type="project" value="GO_Central"/>
</dbReference>
<dbReference type="GO" id="GO:0009277">
    <property type="term" value="C:fungal-type cell wall"/>
    <property type="evidence" value="ECO:0000314"/>
    <property type="project" value="CGD"/>
</dbReference>
<dbReference type="GO" id="GO:0030446">
    <property type="term" value="C:hyphal cell wall"/>
    <property type="evidence" value="ECO:0000318"/>
    <property type="project" value="GO_Central"/>
</dbReference>
<dbReference type="GO" id="GO:0005886">
    <property type="term" value="C:plasma membrane"/>
    <property type="evidence" value="ECO:0007669"/>
    <property type="project" value="UniProtKB-SubCell"/>
</dbReference>
<dbReference type="GO" id="GO:0098552">
    <property type="term" value="C:side of membrane"/>
    <property type="evidence" value="ECO:0007669"/>
    <property type="project" value="UniProtKB-KW"/>
</dbReference>
<dbReference type="GO" id="GO:0030445">
    <property type="term" value="C:yeast-form cell wall"/>
    <property type="evidence" value="ECO:0000318"/>
    <property type="project" value="GO_Central"/>
</dbReference>
<dbReference type="GO" id="GO:0001968">
    <property type="term" value="F:fibronectin binding"/>
    <property type="evidence" value="ECO:0000314"/>
    <property type="project" value="CGD"/>
</dbReference>
<dbReference type="GO" id="GO:0042277">
    <property type="term" value="F:peptide binding"/>
    <property type="evidence" value="ECO:0000314"/>
    <property type="project" value="CGD"/>
</dbReference>
<dbReference type="GO" id="GO:0044406">
    <property type="term" value="P:adhesion of symbiont to host"/>
    <property type="evidence" value="ECO:0000314"/>
    <property type="project" value="CGD"/>
</dbReference>
<dbReference type="GO" id="GO:0007155">
    <property type="term" value="P:cell adhesion"/>
    <property type="evidence" value="ECO:0000314"/>
    <property type="project" value="CGD"/>
</dbReference>
<dbReference type="GO" id="GO:0043710">
    <property type="term" value="P:cell adhesion involved in multi-species biofilm formation"/>
    <property type="evidence" value="ECO:0000315"/>
    <property type="project" value="CGD"/>
</dbReference>
<dbReference type="GO" id="GO:0043709">
    <property type="term" value="P:cell adhesion involved in single-species biofilm formation"/>
    <property type="evidence" value="ECO:0000315"/>
    <property type="project" value="CGD"/>
</dbReference>
<dbReference type="GO" id="GO:0098609">
    <property type="term" value="P:cell-cell adhesion"/>
    <property type="evidence" value="ECO:0000314"/>
    <property type="project" value="CGD"/>
</dbReference>
<dbReference type="GO" id="GO:0007160">
    <property type="term" value="P:cell-matrix adhesion"/>
    <property type="evidence" value="ECO:0000314"/>
    <property type="project" value="CGD"/>
</dbReference>
<dbReference type="GO" id="GO:0030448">
    <property type="term" value="P:hyphal growth"/>
    <property type="evidence" value="ECO:0000318"/>
    <property type="project" value="GO_Central"/>
</dbReference>
<dbReference type="GO" id="GO:0044011">
    <property type="term" value="P:single-species biofilm formation on inanimate substrate"/>
    <property type="evidence" value="ECO:0000318"/>
    <property type="project" value="GO_Central"/>
</dbReference>
<dbReference type="GO" id="GO:0044409">
    <property type="term" value="P:symbiont entry into host"/>
    <property type="evidence" value="ECO:0000314"/>
    <property type="project" value="CGD"/>
</dbReference>
<dbReference type="FunFam" id="2.60.40.1280:FF:000001">
    <property type="entry name" value="Agglutinin-like protein 3"/>
    <property type="match status" value="1"/>
</dbReference>
<dbReference type="FunFam" id="2.60.40.2430:FF:000001">
    <property type="entry name" value="Agglutinin-like protein 3"/>
    <property type="match status" value="1"/>
</dbReference>
<dbReference type="Gene3D" id="2.60.40.1280">
    <property type="match status" value="1"/>
</dbReference>
<dbReference type="Gene3D" id="2.60.40.2430">
    <property type="entry name" value="Agglutinin-like protein, N-terminal domain, N2 subdomain"/>
    <property type="match status" value="1"/>
</dbReference>
<dbReference type="InterPro" id="IPR008966">
    <property type="entry name" value="Adhesion_dom_sf"/>
</dbReference>
<dbReference type="InterPro" id="IPR008440">
    <property type="entry name" value="Agglutinin-like_ALS_rpt"/>
</dbReference>
<dbReference type="InterPro" id="IPR024672">
    <property type="entry name" value="Agglutinin-like_N"/>
</dbReference>
<dbReference type="InterPro" id="IPR043063">
    <property type="entry name" value="Agglutinin-like_N_N2"/>
</dbReference>
<dbReference type="InterPro" id="IPR033504">
    <property type="entry name" value="ALS"/>
</dbReference>
<dbReference type="InterPro" id="IPR011252">
    <property type="entry name" value="Fibrogen-bd_dom1"/>
</dbReference>
<dbReference type="PANTHER" id="PTHR33793:SF2">
    <property type="entry name" value="AGGLUTININ-LIKE PROTEIN 6"/>
    <property type="match status" value="1"/>
</dbReference>
<dbReference type="PANTHER" id="PTHR33793">
    <property type="entry name" value="ALPHA-AGGLUTININ"/>
    <property type="match status" value="1"/>
</dbReference>
<dbReference type="Pfam" id="PF05792">
    <property type="entry name" value="Candida_ALS"/>
    <property type="match status" value="6"/>
</dbReference>
<dbReference type="Pfam" id="PF11766">
    <property type="entry name" value="Candida_ALS_N"/>
    <property type="match status" value="1"/>
</dbReference>
<dbReference type="SMART" id="SM01056">
    <property type="entry name" value="Candida_ALS_N"/>
    <property type="match status" value="1"/>
</dbReference>
<dbReference type="SUPFAM" id="SSF49401">
    <property type="entry name" value="Bacterial adhesins"/>
    <property type="match status" value="1"/>
</dbReference>
<sequence>MIQQFTLLFLYLSFATAKAITGIFNSIDSLTWSNAGNYAFKGPGYPTWNAVLGWSLDGTSANPGDTFILNMPCVFKFTASQKSVDLTADGVKYATCQFYSGEEFTTFSSLKCTVNNNLRSSIKALGTVTLPIAFNVGGTGSSVDLEDSKCFTAGTNTVTFNDGSKKLSIAVNFEKSTVDQSGYLTTSRFMPSLNKIATLYVAPQCENGYTSGTMGFSTSYGDVAIDCSNVHIGISKGVNDWNHPVTSESFSYTKSCSSFGISITYQNVPAGYRPFIDAYISPSDNNQYQLSYKNDYTCVDDYWQHAPFTLKWTGYKNSDAGSNGIVIVATTRTVTDSTTAVTTLPFNPSVDKTKTIEILQPIPTTTITTSYVGVTTSYSTKTAPIGETATVIVDVPYHTTTTVTSEWTGTITTTTTRTNPTDSIDTVVVQVPLPNPTTTTTQFWSESFTSTTTITNSLKGTDSVIVREPHNPTVTTTEFWSESYATTETITNGPEGTDSVIVREPHNPTVTTTEFWSESYATTETVTNKPEGTDSVIIKEPHNPTVTTTEFWSESYATTETITTGPLGTDSIVIHDPLEESSSTTAIESSDSNISSSAQESSSSVEQSSSIVGLSSSSDIPLSSDMPSSSSTGLTSSESSTVSSYDSDSSSSSELSTFSSSESYSSSISDTTNFWDSSSSDLESTSITWSSSIDAQSSQSVQSVSNSISTSQETTSSSGEESNTSVTDILVSSDASSILNSDISSYYPSSTISLSDDFPHTIAGEPDSRSSSSIASTVEISSDLVSLTSDPTSSFDSSSSLNSDSSSSPFSDESDISASSSFSTLVAPSFSLSSSSSLSLTYPHYVNSTTYHASESESSSVASPSMASESANDDTHTLSESTDTTSSIGTDSSTVTFCRRDNGDGCIVTGMPSSSIDSEQTSDVTTTSSFVASSTPTSAEQSITDNPNIDSSQTSASSSTKSSVSVSDTVVNSISLSETSTLSSDDSTSSDTSISSTTNSDTGNINAGSSHTSTASIKESSIQKTGVMLSSSYLSTKLSSTSDITTELITTELITTELTTIEDNEPNTFTSTPSSHSEIFSSDNSVLSKQVDRESTIKTSPTTDVTTVSSLSVHSTEASTATLGENSFSNVASTPSNIATSLRSTSSSSNHATESSGTVKSEASAEAIPSPPTSTDNRLSYSTEEAKGITYANSGSTNNLITESQVAAPTDSTSVLIENPVVTSTFDDNSSAAVDQPSKTKSIEESIMNPDSTNETNNGFIATLSQAQVPNSLIHSESISTTMAKTTDASINGDSAASNSQPTTLIQQVATSSYNQPLITTYAGSSSATKHPSWLLKFISVALFFFL</sequence>
<name>ALS5_CANAL</name>
<protein>
    <recommendedName>
        <fullName>Agglutinin-like protein 5</fullName>
    </recommendedName>
    <alternativeName>
        <fullName>Adhesin 5</fullName>
    </alternativeName>
</protein>
<gene>
    <name type="primary">ALS5</name>
    <name type="synonym">ALA1</name>
    <name type="synonym">ALS99</name>
    <name type="ordered locus">CAALFM_C603690WA</name>
    <name type="ORF">CaO19.13158</name>
    <name type="ORF">CaO19.5736</name>
</gene>
<reference key="1">
    <citation type="journal article" date="2003" name="Microbiology">
        <title>Allelic variation in the contiguous loci encoding Candida albicans ALS5, ALS1 and ALS9.</title>
        <authorList>
            <person name="Zhao X."/>
            <person name="Pujol C."/>
            <person name="Soll D.R."/>
            <person name="Hoyer L.L."/>
        </authorList>
    </citation>
    <scope>NUCLEOTIDE SEQUENCE [GENOMIC DNA]</scope>
    <scope>VARIANTS</scope>
    <source>
        <strain>SC5314 / ATCC MYA-2876</strain>
    </source>
</reference>
<reference key="2">
    <citation type="journal article" date="2004" name="Proc. Natl. Acad. Sci. U.S.A.">
        <title>The diploid genome sequence of Candida albicans.</title>
        <authorList>
            <person name="Jones T."/>
            <person name="Federspiel N.A."/>
            <person name="Chibana H."/>
            <person name="Dungan J."/>
            <person name="Kalman S."/>
            <person name="Magee B.B."/>
            <person name="Newport G."/>
            <person name="Thorstenson Y.R."/>
            <person name="Agabian N."/>
            <person name="Magee P.T."/>
            <person name="Davis R.W."/>
            <person name="Scherer S."/>
        </authorList>
    </citation>
    <scope>NUCLEOTIDE SEQUENCE [LARGE SCALE GENOMIC DNA]</scope>
    <source>
        <strain>SC5314 / ATCC MYA-2876</strain>
    </source>
</reference>
<reference key="3">
    <citation type="journal article" date="2007" name="Genome Biol.">
        <title>Assembly of the Candida albicans genome into sixteen supercontigs aligned on the eight chromosomes.</title>
        <authorList>
            <person name="van het Hoog M."/>
            <person name="Rast T.J."/>
            <person name="Martchenko M."/>
            <person name="Grindle S."/>
            <person name="Dignard D."/>
            <person name="Hogues H."/>
            <person name="Cuomo C."/>
            <person name="Berriman M."/>
            <person name="Scherer S."/>
            <person name="Magee B.B."/>
            <person name="Whiteway M."/>
            <person name="Chibana H."/>
            <person name="Nantel A."/>
            <person name="Magee P.T."/>
        </authorList>
    </citation>
    <scope>GENOME REANNOTATION</scope>
    <source>
        <strain>SC5314 / ATCC MYA-2876</strain>
    </source>
</reference>
<reference key="4">
    <citation type="journal article" date="2013" name="Genome Biol.">
        <title>Assembly of a phased diploid Candida albicans genome facilitates allele-specific measurements and provides a simple model for repeat and indel structure.</title>
        <authorList>
            <person name="Muzzey D."/>
            <person name="Schwartz K."/>
            <person name="Weissman J.S."/>
            <person name="Sherlock G."/>
        </authorList>
    </citation>
    <scope>NUCLEOTIDE SEQUENCE [LARGE SCALE GENOMIC DNA]</scope>
    <scope>GENOME REANNOTATION</scope>
    <source>
        <strain>SC5314 / ATCC MYA-2876</strain>
    </source>
</reference>
<reference key="5">
    <citation type="journal article" date="1997" name="Infect. Immun.">
        <title>Expression, cloning, and characterization of a Candida albicans gene, ALA1, that confers adherence properties upon Saccharomyces cerevisiae for extracellular matrix proteins.</title>
        <authorList>
            <person name="Gaur N.K."/>
            <person name="Klotz S.A."/>
        </authorList>
    </citation>
    <scope>FUNCTION</scope>
</reference>
<reference key="6">
    <citation type="journal article" date="1999" name="Infect. Immun.">
        <title>Overexpression of the Candida albicans ALA1 gene in Saccharomyces cerevisiae results in aggregation following attachment of yeast cells to extracellular matrix proteins, adherence properties similar to those of Candida albicans.</title>
        <authorList>
            <person name="Gaur N.K."/>
            <person name="Klotz S.A."/>
            <person name="Henderson R.L."/>
        </authorList>
    </citation>
    <scope>FUNCTION</scope>
</reference>
<reference key="7">
    <citation type="journal article" date="2002" name="Cell Commun. Adhes.">
        <title>Candida albicans and Saccharomyces cerevisiae expressing ALA1/ALS5 adhere to accessible threonine, serine, or alanine patches.</title>
        <authorList>
            <person name="Gaur N.K."/>
            <person name="Smith R.L."/>
            <person name="Klotz S.A."/>
        </authorList>
    </citation>
    <scope>FUNCTION</scope>
</reference>
<reference key="8">
    <citation type="journal article" date="2003" name="Yeast">
        <title>Genome-wide identification of fungal GPI proteins.</title>
        <authorList>
            <person name="De Groot P.W."/>
            <person name="Hellingwerf K.J."/>
            <person name="Klis F.M."/>
        </authorList>
    </citation>
    <scope>PREDICTION OF GPI-ANCHOR</scope>
</reference>
<reference key="9">
    <citation type="journal article" date="2004" name="Infect. Immun.">
        <title>Degenerate peptide recognition by Candida albicans adhesins Als5p and Als1p.</title>
        <authorList>
            <person name="Klotz S.A."/>
            <person name="Gaur N.K."/>
            <person name="Lake D.F."/>
            <person name="Chan V."/>
            <person name="Rauceo J."/>
            <person name="Lipke P.N."/>
        </authorList>
    </citation>
    <scope>FUNCTION</scope>
</reference>
<reference key="10">
    <citation type="journal article" date="2004" name="Infect. Immun.">
        <title>Global cell surface conformational shift mediated by a Candida albicans adhesin.</title>
        <authorList>
            <person name="Rauceo J.M."/>
            <person name="Gaur N.K."/>
            <person name="Lee K.G."/>
            <person name="Edwards J.E."/>
            <person name="Klotz S.A."/>
            <person name="Lipke P.N."/>
        </authorList>
    </citation>
    <scope>FUNCTION</scope>
</reference>
<reference key="11">
    <citation type="journal article" date="2004" name="J. Biol. Chem.">
        <title>Functional and structural diversity in the Als protein family of Candida albicans.</title>
        <authorList>
            <person name="Sheppard D.C."/>
            <person name="Yeaman M.R."/>
            <person name="Welch W.H."/>
            <person name="Phan Q.T."/>
            <person name="Fu Y."/>
            <person name="Ibrahim A.S."/>
            <person name="Filler S.G."/>
            <person name="Zhang M."/>
            <person name="Waring A.J."/>
            <person name="Edwards J.E. Jr."/>
        </authorList>
    </citation>
    <scope>FUNCTION</scope>
    <scope>DOMAIN</scope>
</reference>
<reference key="12">
    <citation type="journal article" date="2005" name="Infect. Immun.">
        <title>Use of green fluorescent protein and reverse transcription-PCR to monitor Candida albicans agglutinin-like sequence gene expression in a murine model of disseminated candidiasis.</title>
        <authorList>
            <person name="Green C.B."/>
            <person name="Zhao X."/>
            <person name="Hoyer L.L."/>
        </authorList>
    </citation>
    <scope>INDUCTION</scope>
</reference>
<reference key="13">
    <citation type="journal article" date="2007" name="Med. Mycol.">
        <title>Candida albicans Als proteins mediate aggregation with bacteria and yeasts.</title>
        <authorList>
            <person name="Klotz S.A."/>
            <person name="Gaur N.K."/>
            <person name="De Armond R."/>
            <person name="Sheppard D."/>
            <person name="Khardori N."/>
            <person name="Edwards J.E. Jr."/>
            <person name="Lipke P.N."/>
            <person name="El-Azizi M."/>
        </authorList>
    </citation>
    <scope>FUNCTION</scope>
</reference>
<reference key="14">
    <citation type="journal article" date="2008" name="Eukaryot. Cell">
        <title>Candida albicans Als adhesins have conserved amyloid-forming sequences.</title>
        <authorList>
            <person name="Otoo H.N."/>
            <person name="Lee K.G."/>
            <person name="Qiu W."/>
            <person name="Lipke P.N."/>
        </authorList>
    </citation>
    <scope>SUBUNIT</scope>
</reference>
<reference key="15">
    <citation type="journal article" date="2010" name="BMC Microbiol.">
        <title>Real-time PCR expression profiling of genes encoding potential virulence factors in Candida albicans biofilms: identification of model-dependent and -independent gene expression.</title>
        <authorList>
            <person name="Nailis H."/>
            <person name="Kucharikova S."/>
            <person name="Ricicova M."/>
            <person name="Van Dijck P."/>
            <person name="Deforce D."/>
            <person name="Nelis H."/>
            <person name="Coenye T."/>
        </authorList>
    </citation>
    <scope>INDUCTION</scope>
</reference>
<reference key="16">
    <citation type="journal article" date="2010" name="Eukaryot. Cell">
        <title>Structure and function of glycosylated tandem repeats from Candida albicans Als adhesins.</title>
        <authorList>
            <person name="Frank A.T."/>
            <person name="Ramsook C.B."/>
            <person name="Otoo H.N."/>
            <person name="Tan C."/>
            <person name="Soybelman G."/>
            <person name="Rauceo J.M."/>
            <person name="Gaur N.K."/>
            <person name="Klotz S.A."/>
            <person name="Lipke P.N."/>
        </authorList>
    </citation>
    <scope>DOMAIN</scope>
    <scope>SUBUNIT</scope>
</reference>
<reference key="17">
    <citation type="journal article" date="2010" name="Proc. Natl. Acad. Sci. U.S.A.">
        <title>Force-induced formation and propagation of adhesion nanodomains in living fungal cells.</title>
        <authorList>
            <person name="Alsteens D."/>
            <person name="Garcia M.C."/>
            <person name="Lipke P.N."/>
            <person name="Dufrene Y.F."/>
        </authorList>
    </citation>
    <scope>SUBCELLULAR LOCATION</scope>
</reference>
<reference key="18">
    <citation type="journal article" date="2011" name="PLoS ONE">
        <title>A role for amyloid in cell aggregation and biofilm formation.</title>
        <authorList>
            <person name="Garcia M.C."/>
            <person name="Lee J.T."/>
            <person name="Ramsook C.B."/>
            <person name="Alsteens D."/>
            <person name="Dufrene Y.F."/>
            <person name="Lipke P.N."/>
        </authorList>
    </citation>
    <scope>FUNCTION</scope>
    <scope>MUTAGENESIS OF VAL-326</scope>
</reference>
<reference key="19">
    <citation type="journal article" date="2012" name="FEMS Immunol. Med. Microbiol.">
        <title>Profiling of adhesive properties of the agglutinin-like sequence (ALS) protein family, a virulent attribute of Candida albicans.</title>
        <authorList>
            <person name="Aoki W."/>
            <person name="Kitahara N."/>
            <person name="Miura N."/>
            <person name="Morisaka H."/>
            <person name="Kuroda K."/>
            <person name="Ueda M."/>
        </authorList>
    </citation>
    <scope>FUNCTION</scope>
</reference>
<reference key="20">
    <citation type="journal article" date="2012" name="Mycoses">
        <title>Frequency and expression of ALS and HWP1 genotypes in Candida albicans strains isolated from Mexican patients suffering from vaginal candidosis.</title>
        <authorList>
            <person name="Monroy-Perez E."/>
            <person name="Sainz-Espunes T."/>
            <person name="Paniagua-Contreras G."/>
            <person name="Negrete-Abascal E."/>
            <person name="Rodriguez-Moctezuma J.R."/>
            <person name="Vaca S."/>
        </authorList>
    </citation>
    <scope>FUNCTION</scope>
</reference>
<feature type="signal peptide" evidence="2">
    <location>
        <begin position="1"/>
        <end position="19"/>
    </location>
</feature>
<feature type="chain" id="PRO_0000420222" description="Agglutinin-like protein 5">
    <location>
        <begin position="20"/>
        <end position="1326"/>
    </location>
</feature>
<feature type="propeptide" id="PRO_0000420223" description="Removed in mature form" evidence="2">
    <location>
        <begin position="1327"/>
        <end position="1347"/>
    </location>
</feature>
<feature type="repeat" description="ALS 1">
    <location>
        <begin position="365"/>
        <end position="396"/>
    </location>
</feature>
<feature type="repeat" description="ALS 2">
    <location>
        <begin position="401"/>
        <end position="432"/>
    </location>
</feature>
<feature type="repeat" description="ALS 3">
    <location>
        <begin position="438"/>
        <end position="469"/>
    </location>
</feature>
<feature type="repeat" description="ALS 4">
    <location>
        <begin position="474"/>
        <end position="505"/>
    </location>
</feature>
<feature type="repeat" description="ALS 5">
    <location>
        <begin position="510"/>
        <end position="541"/>
    </location>
</feature>
<feature type="repeat" description="ALS 6">
    <location>
        <begin position="546"/>
        <end position="577"/>
    </location>
</feature>
<feature type="region of interest" description="Disordered" evidence="4">
    <location>
        <begin position="580"/>
        <end position="678"/>
    </location>
</feature>
<feature type="region of interest" description="Disordered" evidence="4">
    <location>
        <begin position="704"/>
        <end position="725"/>
    </location>
</feature>
<feature type="region of interest" description="Disordered" evidence="4">
    <location>
        <begin position="789"/>
        <end position="813"/>
    </location>
</feature>
<feature type="region of interest" description="Disordered" evidence="4">
    <location>
        <begin position="855"/>
        <end position="896"/>
    </location>
</feature>
<feature type="region of interest" description="Disordered" evidence="4">
    <location>
        <begin position="909"/>
        <end position="964"/>
    </location>
</feature>
<feature type="region of interest" description="Disordered" evidence="4">
    <location>
        <begin position="977"/>
        <end position="1021"/>
    </location>
</feature>
<feature type="region of interest" description="Disordered" evidence="4">
    <location>
        <begin position="1062"/>
        <end position="1111"/>
    </location>
</feature>
<feature type="region of interest" description="Disordered" evidence="4">
    <location>
        <begin position="1139"/>
        <end position="1180"/>
    </location>
</feature>
<feature type="compositionally biased region" description="Low complexity" evidence="4">
    <location>
        <begin position="856"/>
        <end position="870"/>
    </location>
</feature>
<feature type="compositionally biased region" description="Low complexity" evidence="4">
    <location>
        <begin position="879"/>
        <end position="896"/>
    </location>
</feature>
<feature type="compositionally biased region" description="Low complexity" evidence="4">
    <location>
        <begin position="921"/>
        <end position="939"/>
    </location>
</feature>
<feature type="compositionally biased region" description="Polar residues" evidence="4">
    <location>
        <begin position="940"/>
        <end position="950"/>
    </location>
</feature>
<feature type="compositionally biased region" description="Low complexity" evidence="4">
    <location>
        <begin position="951"/>
        <end position="964"/>
    </location>
</feature>
<feature type="compositionally biased region" description="Low complexity" evidence="4">
    <location>
        <begin position="977"/>
        <end position="1002"/>
    </location>
</feature>
<feature type="compositionally biased region" description="Polar residues" evidence="4">
    <location>
        <begin position="1003"/>
        <end position="1021"/>
    </location>
</feature>
<feature type="compositionally biased region" description="Polar residues" evidence="4">
    <location>
        <begin position="1066"/>
        <end position="1088"/>
    </location>
</feature>
<feature type="compositionally biased region" description="Low complexity" evidence="4">
    <location>
        <begin position="1097"/>
        <end position="1111"/>
    </location>
</feature>
<feature type="compositionally biased region" description="Low complexity" evidence="4">
    <location>
        <begin position="1140"/>
        <end position="1158"/>
    </location>
</feature>
<feature type="lipid moiety-binding region" description="GPI-anchor amidated serine" evidence="2">
    <location>
        <position position="1326"/>
    </location>
</feature>
<feature type="glycosylation site" description="N-linked (GlcNAc...) asparagine" evidence="3">
    <location>
        <position position="593"/>
    </location>
</feature>
<feature type="glycosylation site" description="N-linked (GlcNAc...) asparagine" evidence="3">
    <location>
        <position position="723"/>
    </location>
</feature>
<feature type="glycosylation site" description="N-linked (GlcNAc...) asparagine" evidence="3">
    <location>
        <position position="847"/>
    </location>
</feature>
<feature type="glycosylation site" description="N-linked (GlcNAc...) asparagine" evidence="3">
    <location>
        <position position="1229"/>
    </location>
</feature>
<feature type="glycosylation site" description="N-linked (GlcNAc...) asparagine" evidence="3">
    <location>
        <position position="1254"/>
    </location>
</feature>
<feature type="disulfide bond" evidence="1">
    <location>
        <begin position="73"/>
        <end position="150"/>
    </location>
</feature>
<feature type="disulfide bond" evidence="1">
    <location>
        <begin position="96"/>
        <end position="112"/>
    </location>
</feature>
<feature type="disulfide bond" evidence="1">
    <location>
        <begin position="205"/>
        <end position="298"/>
    </location>
</feature>
<feature type="disulfide bond" evidence="1">
    <location>
        <begin position="227"/>
        <end position="256"/>
    </location>
</feature>
<feature type="sequence variant" description="In allele ALS5-2." evidence="7">
    <original>I</original>
    <variation>L</variation>
    <location>
        <position position="2"/>
    </location>
</feature>
<feature type="sequence variant" description="In allele ALS5-2." evidence="7">
    <original>K</original>
    <variation>R</variation>
    <location>
        <position position="311"/>
    </location>
</feature>
<feature type="sequence variant" description="In allele ALS5-2." evidence="7">
    <original>E</original>
    <variation>K</variation>
    <location>
        <position position="406"/>
    </location>
</feature>
<feature type="sequence variant" description="In allele ALS5-1." evidence="7">
    <original>S</original>
    <variation>SESYATTETITTGPLGTDSVIIKEPHNPTVTTTVFWS</variation>
    <location>
        <position position="481"/>
    </location>
</feature>
<feature type="sequence variant" description="In allele ALS5-1." evidence="7">
    <original>N</original>
    <variation>T</variation>
    <location>
        <position position="492"/>
    </location>
</feature>
<feature type="sequence variant" description="In allele ALS5-1." evidence="7">
    <original>E</original>
    <variation>L</variation>
    <location>
        <position position="495"/>
    </location>
</feature>
<feature type="sequence variant" description="In allele ALS5-1." evidence="7">
    <original>VR</original>
    <variation>IK</variation>
    <location>
        <begin position="502"/>
        <end position="503"/>
    </location>
</feature>
<feature type="sequence variant" description="In allele ALS5-1." evidence="7">
    <original>E</original>
    <variation>K</variation>
    <location>
        <position position="514"/>
    </location>
</feature>
<feature type="sequence variant" description="In allele ALS5-1." evidence="7">
    <original>V</original>
    <variation>I</variation>
    <location>
        <position position="526"/>
    </location>
</feature>
<feature type="sequence variant" description="In allele ALS5-1." evidence="7">
    <original>K</original>
    <variation>R</variation>
    <location>
        <position position="539"/>
    </location>
</feature>
<feature type="sequence variant" description="In allele ALS5-2." evidence="7">
    <original>H</original>
    <variation>Y</variation>
    <location>
        <position position="542"/>
    </location>
</feature>
<feature type="sequence variant" description="In allele ALS5-2." evidence="7">
    <original>A</original>
    <variation>T</variation>
    <location>
        <position position="1167"/>
    </location>
</feature>
<feature type="sequence variant" description="In allele ALS5-2." evidence="7">
    <original>T</original>
    <variation>N</variation>
    <location>
        <position position="1202"/>
    </location>
</feature>
<feature type="sequence variant" description="In allele ALS5-1." evidence="7">
    <original>AQV</original>
    <variation>SEA</variation>
    <location>
        <begin position="1267"/>
        <end position="1269"/>
    </location>
</feature>
<feature type="sequence variant" description="In allele ALS5-2." evidence="7">
    <original>N</original>
    <variation>S</variation>
    <location>
        <position position="1271"/>
    </location>
</feature>
<feature type="sequence variant" description="In allele ALS5-2." evidence="7">
    <original>L</original>
    <variation>S</variation>
    <location>
        <position position="1273"/>
    </location>
</feature>
<feature type="sequence variant" description="In allele ALS5-2." evidence="7">
    <original>S</original>
    <variation>L</variation>
    <location>
        <position position="1278"/>
    </location>
</feature>
<feature type="sequence variant" description="In allele ALS5-2." evidence="7">
    <original>M</original>
    <variation>T</variation>
    <location>
        <position position="1283"/>
    </location>
</feature>
<feature type="sequence variant" description="In allele ALS5-2." evidence="7">
    <original>I</original>
    <variation>M</variation>
    <location>
        <position position="1291"/>
    </location>
</feature>
<feature type="mutagenesis site" description="Impairs amyloid formation and decreases cell aggregation." evidence="17">
    <original>V</original>
    <variation>N</variation>
    <location>
        <position position="326"/>
    </location>
</feature>
<feature type="sequence conflict" description="In Ref. 1; AAO72528/AAO72529." evidence="21" ref="1">
    <original>I</original>
    <variation>V</variation>
    <location>
        <position position="538"/>
    </location>
</feature>
<feature type="sequence conflict" description="In Ref. 1; AAO72528/AAO72529." evidence="21" ref="1">
    <original>T</original>
    <variation>I</variation>
    <location>
        <position position="841"/>
    </location>
</feature>
<feature type="sequence conflict" description="In Ref. 1; AAO72528/AAO72529." evidence="21" ref="1">
    <original>M</original>
    <variation>I</variation>
    <location>
        <position position="911"/>
    </location>
</feature>
<feature type="sequence conflict" description="In Ref. 1; AAO72528/AAO72529." evidence="21" ref="1">
    <original>S</original>
    <variation>L</variation>
    <location>
        <position position="975"/>
    </location>
</feature>
<feature type="sequence conflict" description="In Ref. 1; AAO72528/AAO72529." evidence="21" ref="1">
    <original>M</original>
    <variation>T</variation>
    <location>
        <position position="1028"/>
    </location>
</feature>
<feature type="sequence conflict" description="In Ref. 1; AAO72528/AAO72529." evidence="21" ref="1">
    <original>T</original>
    <variation>I</variation>
    <location>
        <position position="1046"/>
    </location>
</feature>